<feature type="chain" id="PRO_0000173564" description="Transaldolase">
    <location>
        <begin position="1"/>
        <end position="337"/>
    </location>
</feature>
<feature type="short sequence motif" description="Nuclear localization signal" evidence="1">
    <location>
        <begin position="1"/>
        <end position="10"/>
    </location>
</feature>
<feature type="active site" description="Schiff-base intermediate with substrate" evidence="2">
    <location>
        <position position="142"/>
    </location>
</feature>
<feature type="modified residue" description="N6-acetyllysine" evidence="1">
    <location>
        <position position="115"/>
    </location>
</feature>
<feature type="modified residue" description="N6-acetyllysine" evidence="12">
    <location>
        <position position="219"/>
    </location>
</feature>
<feature type="modified residue" description="Phosphoserine" evidence="13 14">
    <location>
        <position position="237"/>
    </location>
</feature>
<feature type="modified residue" description="Phosphoserine" evidence="13">
    <location>
        <position position="256"/>
    </location>
</feature>
<feature type="modified residue" description="N6-acetyllysine" evidence="12">
    <location>
        <position position="269"/>
    </location>
</feature>
<feature type="modified residue" description="N6-acetyllysine" evidence="12">
    <location>
        <position position="286"/>
    </location>
</feature>
<feature type="modified residue" description="N6-acetyllysine" evidence="12">
    <location>
        <position position="321"/>
    </location>
</feature>
<feature type="splice variant" id="VSP_061595" description="In isoform 2." evidence="9">
    <location>
        <begin position="1"/>
        <end position="10"/>
    </location>
</feature>
<feature type="sequence variant" id="VAR_011511" description="In TALDOD." evidence="3">
    <location>
        <position position="171"/>
    </location>
</feature>
<feature type="sequence variant" id="VAR_086514" description="In TALDOD; dbSNP:rs751425603." evidence="5">
    <original>R</original>
    <variation>C</variation>
    <location>
        <position position="192"/>
    </location>
</feature>
<feature type="mutagenesis site" description="Confers fructose-6-phosphate aldolase activity." evidence="4">
    <original>F</original>
    <variation>Y</variation>
    <location>
        <position position="189"/>
    </location>
</feature>
<feature type="helix" evidence="15">
    <location>
        <begin position="14"/>
        <end position="21"/>
    </location>
</feature>
<feature type="strand" evidence="15">
    <location>
        <begin position="22"/>
        <end position="27"/>
    </location>
</feature>
<feature type="turn" evidence="15">
    <location>
        <begin position="31"/>
        <end position="34"/>
    </location>
</feature>
<feature type="helix" evidence="15">
    <location>
        <begin position="35"/>
        <end position="37"/>
    </location>
</feature>
<feature type="strand" evidence="15">
    <location>
        <begin position="40"/>
        <end position="43"/>
    </location>
</feature>
<feature type="helix" evidence="15">
    <location>
        <begin position="46"/>
        <end position="53"/>
    </location>
</feature>
<feature type="helix" evidence="15">
    <location>
        <begin position="56"/>
        <end position="58"/>
    </location>
</feature>
<feature type="helix" evidence="15">
    <location>
        <begin position="59"/>
        <end position="72"/>
    </location>
</feature>
<feature type="helix" evidence="15">
    <location>
        <begin position="76"/>
        <end position="98"/>
    </location>
</feature>
<feature type="strand" evidence="15">
    <location>
        <begin position="103"/>
        <end position="106"/>
    </location>
</feature>
<feature type="helix" evidence="15">
    <location>
        <begin position="109"/>
        <end position="111"/>
    </location>
</feature>
<feature type="helix" evidence="15">
    <location>
        <begin position="115"/>
        <end position="131"/>
    </location>
</feature>
<feature type="helix" evidence="15">
    <location>
        <begin position="136"/>
        <end position="138"/>
    </location>
</feature>
<feature type="strand" evidence="15">
    <location>
        <begin position="139"/>
        <end position="144"/>
    </location>
</feature>
<feature type="helix" evidence="15">
    <location>
        <begin position="147"/>
        <end position="160"/>
    </location>
</feature>
<feature type="strand" evidence="15">
    <location>
        <begin position="164"/>
        <end position="169"/>
    </location>
</feature>
<feature type="helix" evidence="15">
    <location>
        <begin position="172"/>
        <end position="180"/>
    </location>
</feature>
<feature type="strand" evidence="15">
    <location>
        <begin position="184"/>
        <end position="190"/>
    </location>
</feature>
<feature type="helix" evidence="15">
    <location>
        <begin position="191"/>
        <end position="200"/>
    </location>
</feature>
<feature type="helix" evidence="15">
    <location>
        <begin position="208"/>
        <end position="210"/>
    </location>
</feature>
<feature type="helix" evidence="15">
    <location>
        <begin position="212"/>
        <end position="226"/>
    </location>
</feature>
<feature type="strand" evidence="15">
    <location>
        <begin position="232"/>
        <end position="236"/>
    </location>
</feature>
<feature type="helix" evidence="15">
    <location>
        <begin position="241"/>
        <end position="245"/>
    </location>
</feature>
<feature type="turn" evidence="15">
    <location>
        <begin position="246"/>
        <end position="249"/>
    </location>
</feature>
<feature type="strand" evidence="15">
    <location>
        <begin position="250"/>
        <end position="255"/>
    </location>
</feature>
<feature type="helix" evidence="15">
    <location>
        <begin position="257"/>
        <end position="265"/>
    </location>
</feature>
<feature type="helix" evidence="15">
    <location>
        <begin position="276"/>
        <end position="281"/>
    </location>
</feature>
<feature type="helix" evidence="15">
    <location>
        <begin position="291"/>
        <end position="299"/>
    </location>
</feature>
<feature type="helix" evidence="15">
    <location>
        <begin position="302"/>
        <end position="330"/>
    </location>
</feature>
<comment type="function">
    <text evidence="1 4 6">Catalyzes the rate-limiting step of the non-oxidative phase in the pentose phosphate pathway. Catalyzes the reversible conversion of sedheptulose-7-phosphate and D-glyceraldehyde 3-phosphate into erythrose-4-phosphate and beta-D-fructose 6-phosphate (PubMed:18687684, PubMed:8955144). Not only acts as a pentose phosphate pathway enzyme, but also affects other metabolite pathways by altering its subcellular localization between the nucleus and the cytoplasm (By similarity).</text>
</comment>
<comment type="catalytic activity">
    <reaction evidence="4 6">
        <text>D-sedoheptulose 7-phosphate + D-glyceraldehyde 3-phosphate = D-erythrose 4-phosphate + beta-D-fructose 6-phosphate</text>
        <dbReference type="Rhea" id="RHEA:17053"/>
        <dbReference type="ChEBI" id="CHEBI:16897"/>
        <dbReference type="ChEBI" id="CHEBI:57483"/>
        <dbReference type="ChEBI" id="CHEBI:57634"/>
        <dbReference type="ChEBI" id="CHEBI:59776"/>
        <dbReference type="EC" id="2.2.1.2"/>
    </reaction>
    <physiologicalReaction direction="left-to-right" evidence="10">
        <dbReference type="Rhea" id="RHEA:17054"/>
    </physiologicalReaction>
    <physiologicalReaction direction="right-to-left" evidence="10">
        <dbReference type="Rhea" id="RHEA:17055"/>
    </physiologicalReaction>
</comment>
<comment type="pathway">
    <text evidence="1">Carbohydrate degradation; pentose phosphate pathway; D-glyceraldehyde 3-phosphate and beta-D-fructose 6-phosphate from D-ribose 5-phosphate and D-xylulose 5-phosphate (non-oxidative stage): step 2/3.</text>
</comment>
<comment type="subunit">
    <text evidence="1 2">Homodimer (PubMed:10869557). Heterodimer with isoform 2 (By similarity). Interacts with KPNA1 and KPNA4 (By similarity).</text>
</comment>
<comment type="interaction">
    <interactant intactId="EBI-1056712">
        <id>P37837</id>
    </interactant>
    <interactant intactId="EBI-466029">
        <id>P42858</id>
        <label>HTT</label>
    </interactant>
    <organismsDiffer>false</organismsDiffer>
    <experiments>3</experiments>
</comment>
<comment type="interaction">
    <interactant intactId="EBI-1056712">
        <id>P37837</id>
    </interactant>
    <interactant intactId="EBI-750109">
        <id>Q9NYB0</id>
        <label>TERF2IP</label>
    </interactant>
    <organismsDiffer>false</organismsDiffer>
    <experiments>2</experiments>
</comment>
<comment type="subcellular location">
    <molecule>Isoform 1</molecule>
    <subcellularLocation>
        <location evidence="1">Nucleus</location>
    </subcellularLocation>
    <subcellularLocation>
        <location evidence="1">Cytoplasm</location>
    </subcellularLocation>
    <text evidence="1">Shuttles between the nucleus and the cytoplasm. Actively transported into the nucleus in an importin alpha/beta-dependent manner. Exported into the cytoplasm by CRM1.</text>
</comment>
<comment type="subcellular location">
    <molecule>Isoform 2</molecule>
    <subcellularLocation>
        <location evidence="1">Cytoplasm</location>
    </subcellularLocation>
    <text evidence="1">Imported into the nucleus when incorporated in isoform 1/isoform 2 homodimer.</text>
</comment>
<comment type="alternative products">
    <event type="alternative initiation"/>
    <isoform>
        <id>P37837-1</id>
        <name>1</name>
        <name evidence="7">TALDO1L</name>
        <sequence type="displayed"/>
    </isoform>
    <isoform>
        <id>P37837-2</id>
        <name>2</name>
        <name evidence="7">TALDO1S</name>
        <sequence type="described" ref="VSP_061595"/>
    </isoform>
</comment>
<comment type="domain">
    <text evidence="1">The first 10 amino acids are essential for nuclear localization.</text>
</comment>
<comment type="disease" evidence="3 5">
    <disease id="DI-02377">
        <name>Transaldolase deficiency</name>
        <acronym>TALDOD</acronym>
        <description>An inborn error of the pentose phosphate pathway resulting in early-onset multisystem disease. Clinical features include growth retardation, dysmorphic features, cutis laxa, congenital heart disease, hepatosplenomegaly, telangiectases of the skin, pancytopenia, and bleeding tendency.</description>
        <dbReference type="MIM" id="606003"/>
    </disease>
    <text>The disease is caused by variants affecting the gene represented in this entry.</text>
</comment>
<comment type="similarity">
    <text evidence="8">Belongs to the transaldolase family. Type 1 subfamily.</text>
</comment>
<gene>
    <name evidence="11" type="primary">TALDO1</name>
    <name type="synonym">TAL</name>
    <name type="synonym">TALDO</name>
    <name type="synonym">TALDOR</name>
</gene>
<accession>P37837</accession>
<accession>B2R8M2</accession>
<accession>O00751</accession>
<accession>Q8WV32</accession>
<accession>Q8WZ45</accession>
<evidence type="ECO:0000250" key="1">
    <source>
        <dbReference type="UniProtKB" id="Q93092"/>
    </source>
</evidence>
<evidence type="ECO:0000269" key="2">
    <source>
    </source>
</evidence>
<evidence type="ECO:0000269" key="3">
    <source>
    </source>
</evidence>
<evidence type="ECO:0000269" key="4">
    <source>
    </source>
</evidence>
<evidence type="ECO:0000269" key="5">
    <source>
    </source>
</evidence>
<evidence type="ECO:0000269" key="6">
    <source>
    </source>
</evidence>
<evidence type="ECO:0000303" key="7">
    <source>
    </source>
</evidence>
<evidence type="ECO:0000305" key="8"/>
<evidence type="ECO:0000305" key="9">
    <source>
    </source>
</evidence>
<evidence type="ECO:0000305" key="10">
    <source>
    </source>
</evidence>
<evidence type="ECO:0000312" key="11">
    <source>
        <dbReference type="HGNC" id="HGNC:11559"/>
    </source>
</evidence>
<evidence type="ECO:0007744" key="12">
    <source>
    </source>
</evidence>
<evidence type="ECO:0007744" key="13">
    <source>
    </source>
</evidence>
<evidence type="ECO:0007744" key="14">
    <source>
    </source>
</evidence>
<evidence type="ECO:0007829" key="15">
    <source>
        <dbReference type="PDB" id="1F05"/>
    </source>
</evidence>
<sequence length="337" mass="37540">MSSSPVKRQRMESALDQLKQFTTVVADTGDFHAIDEYKPQDATTNPSLILAAAQMPAYQELVEEAIAYGRKLGGSQEDQIKNAIDKLFVLFGAEILKKIPGRVSTEVDARLSFDKDAMVARARRLIELYKEAGISKDRILIKLSSTWEGIQAGKELEEQHGIHCNMTLLFSFAQAVACAEAGVTLISPFVGRILDWHVANTDKKSYEPLEDPGVKSVTKIYNYYKKFSYKTIVMGASFRNTGEIKALAGCDFLTISPKLLGELLQDNAKLVPVLSAKAAQASDLEKIHLDEKSFRWLHNEDQMAVEKLSDGIRKFAADAVKLERMLTERMFNAENGK</sequence>
<keyword id="KW-0002">3D-structure</keyword>
<keyword id="KW-0007">Acetylation</keyword>
<keyword id="KW-0024">Alternative initiation</keyword>
<keyword id="KW-0963">Cytoplasm</keyword>
<keyword id="KW-0225">Disease variant</keyword>
<keyword id="KW-0539">Nucleus</keyword>
<keyword id="KW-0570">Pentose shunt</keyword>
<keyword id="KW-0597">Phosphoprotein</keyword>
<keyword id="KW-1267">Proteomics identification</keyword>
<keyword id="KW-1185">Reference proteome</keyword>
<keyword id="KW-0704">Schiff base</keyword>
<keyword id="KW-0808">Transferase</keyword>
<reference key="1">
    <citation type="journal article" date="1994" name="J. Biol. Chem.">
        <title>Cloning and expression of the human gene for transaldolase. A novel highly repetitive element constitutes an integral part of the coding sequence.</title>
        <authorList>
            <person name="Banki K."/>
            <person name="Halladay D.L."/>
            <person name="Perl A."/>
        </authorList>
    </citation>
    <scope>NUCLEOTIDE SEQUENCE [MRNA] (ISOFORM 1)</scope>
</reference>
<reference key="2">
    <citation type="journal article" date="1997" name="Genomics">
        <title>The human transaldolase gene (TALDO1) is located on chromosome 11 at p15.4-p15.5.</title>
        <authorList>
            <person name="Banki K."/>
            <person name="Eddy R.L."/>
            <person name="Shows T.B."/>
            <person name="Halladay D.L."/>
            <person name="Bullrich F."/>
            <person name="Croce C.M."/>
            <person name="Jurecic V."/>
            <person name="Baldini A."/>
            <person name="Perl A."/>
        </authorList>
    </citation>
    <scope>SEQUENCE REVISION</scope>
</reference>
<reference key="3">
    <citation type="journal article" date="1998" name="Gene">
        <title>Cloning and chromosomal localization of a paralog and a mouse homolog of the human transaldolase gene.</title>
        <authorList>
            <person name="Kusuda J."/>
            <person name="Hirai M."/>
            <person name="Toyoda A."/>
            <person name="Tanuma R."/>
            <person name="Nomura-Kitabayashi A."/>
            <person name="Hashimoto K."/>
        </authorList>
    </citation>
    <scope>NUCLEOTIDE SEQUENCE [GENOMIC DNA] (ISOFORM 1)</scope>
</reference>
<reference key="4">
    <citation type="journal article" date="2000" name="J. Biol. Chem.">
        <title>Human transaldolase-associated repetitive elements are transcribed by RNA polymerase III.</title>
        <authorList>
            <person name="Perl A."/>
            <person name="Colombo E."/>
            <person name="Samoilova E."/>
            <person name="Butler M.C."/>
            <person name="Banki K."/>
        </authorList>
    </citation>
    <scope>NUCLEOTIDE SEQUENCE [GENOMIC DNA] (ISOFORM 1)</scope>
</reference>
<reference key="5">
    <citation type="journal article" date="2004" name="Nat. Genet.">
        <title>Complete sequencing and characterization of 21,243 full-length human cDNAs.</title>
        <authorList>
            <person name="Ota T."/>
            <person name="Suzuki Y."/>
            <person name="Nishikawa T."/>
            <person name="Otsuki T."/>
            <person name="Sugiyama T."/>
            <person name="Irie R."/>
            <person name="Wakamatsu A."/>
            <person name="Hayashi K."/>
            <person name="Sato H."/>
            <person name="Nagai K."/>
            <person name="Kimura K."/>
            <person name="Makita H."/>
            <person name="Sekine M."/>
            <person name="Obayashi M."/>
            <person name="Nishi T."/>
            <person name="Shibahara T."/>
            <person name="Tanaka T."/>
            <person name="Ishii S."/>
            <person name="Yamamoto J."/>
            <person name="Saito K."/>
            <person name="Kawai Y."/>
            <person name="Isono Y."/>
            <person name="Nakamura Y."/>
            <person name="Nagahari K."/>
            <person name="Murakami K."/>
            <person name="Yasuda T."/>
            <person name="Iwayanagi T."/>
            <person name="Wagatsuma M."/>
            <person name="Shiratori A."/>
            <person name="Sudo H."/>
            <person name="Hosoiri T."/>
            <person name="Kaku Y."/>
            <person name="Kodaira H."/>
            <person name="Kondo H."/>
            <person name="Sugawara M."/>
            <person name="Takahashi M."/>
            <person name="Kanda K."/>
            <person name="Yokoi T."/>
            <person name="Furuya T."/>
            <person name="Kikkawa E."/>
            <person name="Omura Y."/>
            <person name="Abe K."/>
            <person name="Kamihara K."/>
            <person name="Katsuta N."/>
            <person name="Sato K."/>
            <person name="Tanikawa M."/>
            <person name="Yamazaki M."/>
            <person name="Ninomiya K."/>
            <person name="Ishibashi T."/>
            <person name="Yamashita H."/>
            <person name="Murakawa K."/>
            <person name="Fujimori K."/>
            <person name="Tanai H."/>
            <person name="Kimata M."/>
            <person name="Watanabe M."/>
            <person name="Hiraoka S."/>
            <person name="Chiba Y."/>
            <person name="Ishida S."/>
            <person name="Ono Y."/>
            <person name="Takiguchi S."/>
            <person name="Watanabe S."/>
            <person name="Yosida M."/>
            <person name="Hotuta T."/>
            <person name="Kusano J."/>
            <person name="Kanehori K."/>
            <person name="Takahashi-Fujii A."/>
            <person name="Hara H."/>
            <person name="Tanase T.-O."/>
            <person name="Nomura Y."/>
            <person name="Togiya S."/>
            <person name="Komai F."/>
            <person name="Hara R."/>
            <person name="Takeuchi K."/>
            <person name="Arita M."/>
            <person name="Imose N."/>
            <person name="Musashino K."/>
            <person name="Yuuki H."/>
            <person name="Oshima A."/>
            <person name="Sasaki N."/>
            <person name="Aotsuka S."/>
            <person name="Yoshikawa Y."/>
            <person name="Matsunawa H."/>
            <person name="Ichihara T."/>
            <person name="Shiohata N."/>
            <person name="Sano S."/>
            <person name="Moriya S."/>
            <person name="Momiyama H."/>
            <person name="Satoh N."/>
            <person name="Takami S."/>
            <person name="Terashima Y."/>
            <person name="Suzuki O."/>
            <person name="Nakagawa S."/>
            <person name="Senoh A."/>
            <person name="Mizoguchi H."/>
            <person name="Goto Y."/>
            <person name="Shimizu F."/>
            <person name="Wakebe H."/>
            <person name="Hishigaki H."/>
            <person name="Watanabe T."/>
            <person name="Sugiyama A."/>
            <person name="Takemoto M."/>
            <person name="Kawakami B."/>
            <person name="Yamazaki M."/>
            <person name="Watanabe K."/>
            <person name="Kumagai A."/>
            <person name="Itakura S."/>
            <person name="Fukuzumi Y."/>
            <person name="Fujimori Y."/>
            <person name="Komiyama M."/>
            <person name="Tashiro H."/>
            <person name="Tanigami A."/>
            <person name="Fujiwara T."/>
            <person name="Ono T."/>
            <person name="Yamada K."/>
            <person name="Fujii Y."/>
            <person name="Ozaki K."/>
            <person name="Hirao M."/>
            <person name="Ohmori Y."/>
            <person name="Kawabata A."/>
            <person name="Hikiji T."/>
            <person name="Kobatake N."/>
            <person name="Inagaki H."/>
            <person name="Ikema Y."/>
            <person name="Okamoto S."/>
            <person name="Okitani R."/>
            <person name="Kawakami T."/>
            <person name="Noguchi S."/>
            <person name="Itoh T."/>
            <person name="Shigeta K."/>
            <person name="Senba T."/>
            <person name="Matsumura K."/>
            <person name="Nakajima Y."/>
            <person name="Mizuno T."/>
            <person name="Morinaga M."/>
            <person name="Sasaki M."/>
            <person name="Togashi T."/>
            <person name="Oyama M."/>
            <person name="Hata H."/>
            <person name="Watanabe M."/>
            <person name="Komatsu T."/>
            <person name="Mizushima-Sugano J."/>
            <person name="Satoh T."/>
            <person name="Shirai Y."/>
            <person name="Takahashi Y."/>
            <person name="Nakagawa K."/>
            <person name="Okumura K."/>
            <person name="Nagase T."/>
            <person name="Nomura N."/>
            <person name="Kikuchi H."/>
            <person name="Masuho Y."/>
            <person name="Yamashita R."/>
            <person name="Nakai K."/>
            <person name="Yada T."/>
            <person name="Nakamura Y."/>
            <person name="Ohara O."/>
            <person name="Isogai T."/>
            <person name="Sugano S."/>
        </authorList>
    </citation>
    <scope>NUCLEOTIDE SEQUENCE [LARGE SCALE MRNA] (ISOFORM 1)</scope>
    <source>
        <tissue>Cerebellum</tissue>
    </source>
</reference>
<reference key="6">
    <citation type="journal article" date="2004" name="Genome Res.">
        <title>The status, quality, and expansion of the NIH full-length cDNA project: the Mammalian Gene Collection (MGC).</title>
        <authorList>
            <consortium name="The MGC Project Team"/>
        </authorList>
    </citation>
    <scope>NUCLEOTIDE SEQUENCE [LARGE SCALE MRNA] (ISOFORM 1)</scope>
    <source>
        <tissue>Lung</tissue>
        <tissue>Ovary</tissue>
    </source>
</reference>
<reference key="7">
    <citation type="submission" date="2001-11" db="EMBL/GenBank/DDBJ databases">
        <title>Family of active retrotransposons carry two exons of the transaldolase gene and shows evidence of reverse splicing in human DNA.</title>
        <authorList>
            <person name="Perl A."/>
        </authorList>
    </citation>
    <scope>NUCLEOTIDE SEQUENCE [GENOMIC DNA] OF 33-110</scope>
</reference>
<reference key="8">
    <citation type="journal article" date="1996" name="J. Biol. Chem.">
        <title>Glutathione levels and sensitivity to apoptosis are regulated by changes in transaldolase expression.</title>
        <authorList>
            <person name="Banki K."/>
            <person name="Hutter E."/>
            <person name="Colombo E."/>
            <person name="Gonchoroff N.J."/>
            <person name="Perl A."/>
        </authorList>
    </citation>
    <scope>FUNCTION</scope>
    <scope>CATALYTIC ACTIVITY</scope>
</reference>
<reference key="9">
    <citation type="journal article" date="2008" name="J. Biol. Chem.">
        <title>Replacement of a phenylalanine by a tyrosine in the active site confers fructose-6-phosphate aldolase activity to the transaldolase of Escherichia coli and human origin.</title>
        <authorList>
            <person name="Schneider S."/>
            <person name="Sandalova T."/>
            <person name="Schneider G."/>
            <person name="Sprenger G.A."/>
            <person name="Samland A.K."/>
        </authorList>
    </citation>
    <scope>FUNCTION</scope>
    <scope>CATALYTIC ACTIVITY</scope>
    <scope>MUTAGENESIS OF PHE-189</scope>
</reference>
<reference key="10">
    <citation type="journal article" date="2009" name="Science">
        <title>Lysine acetylation targets protein complexes and co-regulates major cellular functions.</title>
        <authorList>
            <person name="Choudhary C."/>
            <person name="Kumar C."/>
            <person name="Gnad F."/>
            <person name="Nielsen M.L."/>
            <person name="Rehman M."/>
            <person name="Walther T.C."/>
            <person name="Olsen J.V."/>
            <person name="Mann M."/>
        </authorList>
    </citation>
    <scope>ACETYLATION [LARGE SCALE ANALYSIS] AT LYS-219; LYS-269; LYS-286 AND LYS-321</scope>
    <scope>IDENTIFICATION BY MASS SPECTROMETRY [LARGE SCALE ANALYSIS]</scope>
</reference>
<reference key="11">
    <citation type="journal article" date="2011" name="BMC Syst. Biol.">
        <title>Initial characterization of the human central proteome.</title>
        <authorList>
            <person name="Burkard T.R."/>
            <person name="Planyavsky M."/>
            <person name="Kaupe I."/>
            <person name="Breitwieser F.P."/>
            <person name="Buerckstuemmer T."/>
            <person name="Bennett K.L."/>
            <person name="Superti-Furga G."/>
            <person name="Colinge J."/>
        </authorList>
    </citation>
    <scope>IDENTIFICATION BY MASS SPECTROMETRY [LARGE SCALE ANALYSIS]</scope>
</reference>
<reference key="12">
    <citation type="journal article" date="2013" name="J. Proteome Res.">
        <title>Toward a comprehensive characterization of a human cancer cell phosphoproteome.</title>
        <authorList>
            <person name="Zhou H."/>
            <person name="Di Palma S."/>
            <person name="Preisinger C."/>
            <person name="Peng M."/>
            <person name="Polat A.N."/>
            <person name="Heck A.J."/>
            <person name="Mohammed S."/>
        </authorList>
    </citation>
    <scope>PHOSPHORYLATION [LARGE SCALE ANALYSIS] AT SER-237 AND SER-256</scope>
    <scope>IDENTIFICATION BY MASS SPECTROMETRY [LARGE SCALE ANALYSIS]</scope>
    <source>
        <tissue>Cervix carcinoma</tissue>
        <tissue>Erythroleukemia</tissue>
    </source>
</reference>
<reference key="13">
    <citation type="journal article" date="2014" name="J. Proteomics">
        <title>An enzyme assisted RP-RPLC approach for in-depth analysis of human liver phosphoproteome.</title>
        <authorList>
            <person name="Bian Y."/>
            <person name="Song C."/>
            <person name="Cheng K."/>
            <person name="Dong M."/>
            <person name="Wang F."/>
            <person name="Huang J."/>
            <person name="Sun D."/>
            <person name="Wang L."/>
            <person name="Ye M."/>
            <person name="Zou H."/>
        </authorList>
    </citation>
    <scope>PHOSPHORYLATION [LARGE SCALE ANALYSIS] AT SER-237</scope>
    <scope>IDENTIFICATION BY MASS SPECTROMETRY [LARGE SCALE ANALYSIS]</scope>
    <source>
        <tissue>Liver</tissue>
    </source>
</reference>
<reference key="14">
    <citation type="journal article" date="2000" name="FEBS Lett.">
        <title>The three-dimensional structure of human transaldolase.</title>
        <authorList>
            <person name="Thorell S."/>
            <person name="Gergely P. Jr."/>
            <person name="Banki K."/>
            <person name="Perl A."/>
            <person name="Schneider G."/>
        </authorList>
    </citation>
    <scope>X-RAY CRYSTALLOGRAPHY (2.45 ANGSTROMS)</scope>
    <scope>SUBUNIT</scope>
    <scope>ACTIVE SITE</scope>
</reference>
<reference key="15">
    <citation type="journal article" date="2016" name="Sci. Rep.">
        <title>Two isoforms of TALDO1 generated by alternative translational initiation show differential nucleocytoplasmic distribution to regulate the global metabolic network.</title>
        <authorList>
            <person name="Moriyama T."/>
            <person name="Tanaka S."/>
            <person name="Nakayama Y."/>
            <person name="Fukumoto M."/>
            <person name="Tsujimura K."/>
            <person name="Yamada K."/>
            <person name="Bamba T."/>
            <person name="Yoneda Y."/>
            <person name="Fukusaki E."/>
            <person name="Oka M."/>
        </authorList>
    </citation>
    <scope>ALTERNATIVE INITIATION</scope>
</reference>
<reference key="16">
    <citation type="journal article" date="2001" name="Am. J. Hum. Genet.">
        <title>Transaldolase deficiency: liver cirrhosis associated with a new inborn error in the pentose phosphate pathway.</title>
        <authorList>
            <person name="Verhoeven N.M."/>
            <person name="Huck J.H.J."/>
            <person name="Roos B."/>
            <person name="Struys E.A."/>
            <person name="Salomons G.S."/>
            <person name="Douwes A.C."/>
            <person name="van der Knaap M.S."/>
            <person name="Jakobs C."/>
        </authorList>
    </citation>
    <scope>VARIANT TALDOD SER-171 DEL</scope>
</reference>
<reference key="17">
    <citation type="journal article" date="2015" name="Eur. J. Pediatr.">
        <title>Transaldolase deficiency caused by the homozygous p.R192C mutation of the TALDO1 gene in four Emirati patients with considerable phenotypic variability.</title>
        <authorList>
            <person name="Al-Shamsi A.M."/>
            <person name="Ben-Salem S."/>
            <person name="Hertecant J."/>
            <person name="Al-Jasmi F."/>
        </authorList>
    </citation>
    <scope>VARIANT TALDOD CYS-192</scope>
</reference>
<dbReference type="EC" id="2.2.1.2" evidence="4 6"/>
<dbReference type="EMBL" id="L19437">
    <property type="protein sequence ID" value="AAB53943.1"/>
    <property type="molecule type" value="mRNA"/>
</dbReference>
<dbReference type="EMBL" id="AF010400">
    <property type="protein sequence ID" value="AAC52068.1"/>
    <property type="molecule type" value="Genomic_DNA"/>
</dbReference>
<dbReference type="EMBL" id="AF010398">
    <property type="protein sequence ID" value="AAC52068.1"/>
    <property type="status" value="JOINED"/>
    <property type="molecule type" value="Genomic_DNA"/>
</dbReference>
<dbReference type="EMBL" id="AF010399">
    <property type="protein sequence ID" value="AAC52068.1"/>
    <property type="status" value="JOINED"/>
    <property type="molecule type" value="Genomic_DNA"/>
</dbReference>
<dbReference type="EMBL" id="AF058913">
    <property type="protein sequence ID" value="AAF40478.1"/>
    <property type="molecule type" value="Genomic_DNA"/>
</dbReference>
<dbReference type="EMBL" id="AK313427">
    <property type="protein sequence ID" value="BAG36219.1"/>
    <property type="molecule type" value="mRNA"/>
</dbReference>
<dbReference type="EMBL" id="BC010103">
    <property type="protein sequence ID" value="AAH10103.1"/>
    <property type="molecule type" value="mRNA"/>
</dbReference>
<dbReference type="EMBL" id="BC018847">
    <property type="protein sequence ID" value="AAH18847.2"/>
    <property type="molecule type" value="mRNA"/>
</dbReference>
<dbReference type="EMBL" id="L27346">
    <property type="protein sequence ID" value="AAL31313.1"/>
    <property type="molecule type" value="Genomic_DNA"/>
</dbReference>
<dbReference type="CCDS" id="CCDS7712.1">
    <molecule id="P37837-1"/>
</dbReference>
<dbReference type="PIR" id="A49985">
    <property type="entry name" value="A49985"/>
</dbReference>
<dbReference type="RefSeq" id="NP_006746.1">
    <molecule id="P37837-1"/>
    <property type="nucleotide sequence ID" value="NM_006755.2"/>
</dbReference>
<dbReference type="PDB" id="1F05">
    <property type="method" value="X-ray"/>
    <property type="resolution" value="2.45 A"/>
    <property type="chains" value="A/B=1-337"/>
</dbReference>
<dbReference type="PDBsum" id="1F05"/>
<dbReference type="SMR" id="P37837"/>
<dbReference type="BioGRID" id="112751">
    <property type="interactions" value="133"/>
</dbReference>
<dbReference type="FunCoup" id="P37837">
    <property type="interactions" value="2166"/>
</dbReference>
<dbReference type="IntAct" id="P37837">
    <property type="interactions" value="31"/>
</dbReference>
<dbReference type="MINT" id="P37837"/>
<dbReference type="STRING" id="9606.ENSP00000321259"/>
<dbReference type="Allergome" id="9551">
    <property type="allergen name" value="Hom s Transaldolase"/>
</dbReference>
<dbReference type="GlyGen" id="P37837">
    <property type="glycosylation" value="1 site, 1 O-linked glycan (1 site)"/>
</dbReference>
<dbReference type="iPTMnet" id="P37837"/>
<dbReference type="MetOSite" id="P37837"/>
<dbReference type="PhosphoSitePlus" id="P37837"/>
<dbReference type="SwissPalm" id="P37837"/>
<dbReference type="BioMuta" id="TALDO1"/>
<dbReference type="DMDM" id="6648092"/>
<dbReference type="OGP" id="P37837"/>
<dbReference type="REPRODUCTION-2DPAGE" id="IPI00744692"/>
<dbReference type="CPTAC" id="CPTAC-2777"/>
<dbReference type="jPOST" id="P37837"/>
<dbReference type="MassIVE" id="P37837"/>
<dbReference type="PaxDb" id="9606-ENSP00000321259"/>
<dbReference type="PeptideAtlas" id="P37837"/>
<dbReference type="PRIDE" id="P37837"/>
<dbReference type="ProteomicsDB" id="55278"/>
<dbReference type="Pumba" id="P37837"/>
<dbReference type="Antibodypedia" id="22640">
    <property type="antibodies" value="282 antibodies from 33 providers"/>
</dbReference>
<dbReference type="DNASU" id="6888"/>
<dbReference type="Ensembl" id="ENST00000319006.8">
    <molecule id="P37837-1"/>
    <property type="protein sequence ID" value="ENSP00000321259.3"/>
    <property type="gene ID" value="ENSG00000177156.11"/>
</dbReference>
<dbReference type="GeneID" id="6888"/>
<dbReference type="KEGG" id="hsa:6888"/>
<dbReference type="MANE-Select" id="ENST00000319006.8">
    <property type="protein sequence ID" value="ENSP00000321259.3"/>
    <property type="RefSeq nucleotide sequence ID" value="NM_006755.2"/>
    <property type="RefSeq protein sequence ID" value="NP_006746.1"/>
</dbReference>
<dbReference type="UCSC" id="uc001lqz.4">
    <molecule id="P37837-1"/>
    <property type="organism name" value="human"/>
</dbReference>
<dbReference type="AGR" id="HGNC:11559"/>
<dbReference type="CTD" id="6888"/>
<dbReference type="DisGeNET" id="6888"/>
<dbReference type="GeneCards" id="TALDO1"/>
<dbReference type="HGNC" id="HGNC:11559">
    <property type="gene designation" value="TALDO1"/>
</dbReference>
<dbReference type="HPA" id="ENSG00000177156">
    <property type="expression patterns" value="Low tissue specificity"/>
</dbReference>
<dbReference type="MalaCards" id="TALDO1"/>
<dbReference type="MIM" id="602063">
    <property type="type" value="gene"/>
</dbReference>
<dbReference type="MIM" id="606003">
    <property type="type" value="phenotype"/>
</dbReference>
<dbReference type="neXtProt" id="NX_P37837"/>
<dbReference type="OpenTargets" id="ENSG00000177156"/>
<dbReference type="Orphanet" id="101028">
    <property type="disease" value="Transaldolase deficiency"/>
</dbReference>
<dbReference type="PharmGKB" id="PA36328"/>
<dbReference type="VEuPathDB" id="HostDB:ENSG00000177156"/>
<dbReference type="eggNOG" id="KOG2772">
    <property type="taxonomic scope" value="Eukaryota"/>
</dbReference>
<dbReference type="GeneTree" id="ENSGT00390000017361"/>
<dbReference type="HOGENOM" id="CLU_047470_0_1_1"/>
<dbReference type="InParanoid" id="P37837"/>
<dbReference type="OMA" id="THAEFLW"/>
<dbReference type="OrthoDB" id="2015515at2759"/>
<dbReference type="PAN-GO" id="P37837">
    <property type="GO annotations" value="3 GO annotations based on evolutionary models"/>
</dbReference>
<dbReference type="PhylomeDB" id="P37837"/>
<dbReference type="TreeFam" id="TF300757"/>
<dbReference type="PathwayCommons" id="P37837"/>
<dbReference type="Reactome" id="R-HSA-163754">
    <property type="pathway name" value="Insulin effects increased synthesis of Xylulose-5-Phosphate"/>
</dbReference>
<dbReference type="Reactome" id="R-HSA-6791055">
    <property type="pathway name" value="TALDO1 deficiency: failed conversion of SH7P, GA3P to Fru(6)P, E4P"/>
</dbReference>
<dbReference type="Reactome" id="R-HSA-6791462">
    <property type="pathway name" value="TALDO1 deficiency: failed conversion of Fru(6)P, E4P to SH7P, GA3P"/>
</dbReference>
<dbReference type="Reactome" id="R-HSA-71336">
    <property type="pathway name" value="Pentose phosphate pathway"/>
</dbReference>
<dbReference type="Reactome" id="R-HSA-8950505">
    <property type="pathway name" value="Gene and protein expression by JAK-STAT signaling after Interleukin-12 stimulation"/>
</dbReference>
<dbReference type="Reactome" id="R-HSA-9818028">
    <property type="pathway name" value="NFE2L2 regulates pentose phosphate pathway genes"/>
</dbReference>
<dbReference type="SignaLink" id="P37837"/>
<dbReference type="SIGNOR" id="P37837"/>
<dbReference type="UniPathway" id="UPA00115">
    <property type="reaction ID" value="UER00414"/>
</dbReference>
<dbReference type="BioGRID-ORCS" id="6888">
    <property type="hits" value="22 hits in 1162 CRISPR screens"/>
</dbReference>
<dbReference type="CD-CODE" id="FB4E32DD">
    <property type="entry name" value="Presynaptic clusters and postsynaptic densities"/>
</dbReference>
<dbReference type="ChiTaRS" id="TALDO1">
    <property type="organism name" value="human"/>
</dbReference>
<dbReference type="EvolutionaryTrace" id="P37837"/>
<dbReference type="GenomeRNAi" id="6888"/>
<dbReference type="Pharos" id="P37837">
    <property type="development level" value="Tbio"/>
</dbReference>
<dbReference type="PRO" id="PR:P37837"/>
<dbReference type="Proteomes" id="UP000005640">
    <property type="component" value="Chromosome 11"/>
</dbReference>
<dbReference type="RNAct" id="P37837">
    <property type="molecule type" value="protein"/>
</dbReference>
<dbReference type="Bgee" id="ENSG00000177156">
    <property type="expression patterns" value="Expressed in trabecular bone tissue and 207 other cell types or tissues"/>
</dbReference>
<dbReference type="ExpressionAtlas" id="P37837">
    <property type="expression patterns" value="baseline and differential"/>
</dbReference>
<dbReference type="GO" id="GO:0005737">
    <property type="term" value="C:cytoplasm"/>
    <property type="evidence" value="ECO:0000304"/>
    <property type="project" value="UniProtKB"/>
</dbReference>
<dbReference type="GO" id="GO:0005829">
    <property type="term" value="C:cytosol"/>
    <property type="evidence" value="ECO:0000314"/>
    <property type="project" value="FlyBase"/>
</dbReference>
<dbReference type="GO" id="GO:0070062">
    <property type="term" value="C:extracellular exosome"/>
    <property type="evidence" value="ECO:0007005"/>
    <property type="project" value="UniProtKB"/>
</dbReference>
<dbReference type="GO" id="GO:0005634">
    <property type="term" value="C:nucleus"/>
    <property type="evidence" value="ECO:0007005"/>
    <property type="project" value="UniProtKB"/>
</dbReference>
<dbReference type="GO" id="GO:0048029">
    <property type="term" value="F:monosaccharide binding"/>
    <property type="evidence" value="ECO:0007669"/>
    <property type="project" value="Ensembl"/>
</dbReference>
<dbReference type="GO" id="GO:0004801">
    <property type="term" value="F:transaldolase activity"/>
    <property type="evidence" value="ECO:0000314"/>
    <property type="project" value="UniProtKB"/>
</dbReference>
<dbReference type="GO" id="GO:0005975">
    <property type="term" value="P:carbohydrate metabolic process"/>
    <property type="evidence" value="ECO:0000304"/>
    <property type="project" value="ProtInc"/>
</dbReference>
<dbReference type="GO" id="GO:0006002">
    <property type="term" value="P:fructose 6-phosphate metabolic process"/>
    <property type="evidence" value="ECO:0007669"/>
    <property type="project" value="Ensembl"/>
</dbReference>
<dbReference type="GO" id="GO:0009052">
    <property type="term" value="P:pentose-phosphate shunt, non-oxidative branch"/>
    <property type="evidence" value="ECO:0000315"/>
    <property type="project" value="FlyBase"/>
</dbReference>
<dbReference type="CDD" id="cd00957">
    <property type="entry name" value="Transaldolase_TalAB"/>
    <property type="match status" value="1"/>
</dbReference>
<dbReference type="FunFam" id="3.20.20.70:FF:000002">
    <property type="entry name" value="Transaldolase"/>
    <property type="match status" value="1"/>
</dbReference>
<dbReference type="Gene3D" id="3.20.20.70">
    <property type="entry name" value="Aldolase class I"/>
    <property type="match status" value="1"/>
</dbReference>
<dbReference type="HAMAP" id="MF_00492">
    <property type="entry name" value="Transaldolase_1"/>
    <property type="match status" value="1"/>
</dbReference>
<dbReference type="InterPro" id="IPR013785">
    <property type="entry name" value="Aldolase_TIM"/>
</dbReference>
<dbReference type="InterPro" id="IPR001585">
    <property type="entry name" value="TAL/FSA"/>
</dbReference>
<dbReference type="InterPro" id="IPR004730">
    <property type="entry name" value="Transaldolase_1"/>
</dbReference>
<dbReference type="InterPro" id="IPR018225">
    <property type="entry name" value="Transaldolase_AS"/>
</dbReference>
<dbReference type="NCBIfam" id="NF009001">
    <property type="entry name" value="PRK12346.1"/>
    <property type="match status" value="1"/>
</dbReference>
<dbReference type="NCBIfam" id="TIGR00874">
    <property type="entry name" value="talAB"/>
    <property type="match status" value="1"/>
</dbReference>
<dbReference type="PANTHER" id="PTHR10683">
    <property type="entry name" value="TRANSALDOLASE"/>
    <property type="match status" value="1"/>
</dbReference>
<dbReference type="PANTHER" id="PTHR10683:SF18">
    <property type="entry name" value="TRANSALDOLASE"/>
    <property type="match status" value="1"/>
</dbReference>
<dbReference type="Pfam" id="PF00923">
    <property type="entry name" value="TAL_FSA"/>
    <property type="match status" value="1"/>
</dbReference>
<dbReference type="SUPFAM" id="SSF51569">
    <property type="entry name" value="Aldolase"/>
    <property type="match status" value="1"/>
</dbReference>
<dbReference type="PROSITE" id="PS01054">
    <property type="entry name" value="TRANSALDOLASE_1"/>
    <property type="match status" value="1"/>
</dbReference>
<dbReference type="PROSITE" id="PS00958">
    <property type="entry name" value="TRANSALDOLASE_2"/>
    <property type="match status" value="1"/>
</dbReference>
<proteinExistence type="evidence at protein level"/>
<name>TALDO_HUMAN</name>
<organism>
    <name type="scientific">Homo sapiens</name>
    <name type="common">Human</name>
    <dbReference type="NCBI Taxonomy" id="9606"/>
    <lineage>
        <taxon>Eukaryota</taxon>
        <taxon>Metazoa</taxon>
        <taxon>Chordata</taxon>
        <taxon>Craniata</taxon>
        <taxon>Vertebrata</taxon>
        <taxon>Euteleostomi</taxon>
        <taxon>Mammalia</taxon>
        <taxon>Eutheria</taxon>
        <taxon>Euarchontoglires</taxon>
        <taxon>Primates</taxon>
        <taxon>Haplorrhini</taxon>
        <taxon>Catarrhini</taxon>
        <taxon>Hominidae</taxon>
        <taxon>Homo</taxon>
    </lineage>
</organism>
<protein>
    <recommendedName>
        <fullName>Transaldolase</fullName>
        <ecNumber evidence="4 6">2.2.1.2</ecNumber>
    </recommendedName>
</protein>